<organism>
    <name type="scientific">Micrococcus luteus (strain ATCC 4698 / DSM 20030 / JCM 1464 / CCM 169 / CCUG 5858 / IAM 1056 / NBRC 3333 / NCIMB 9278 / NCTC 2665 / VKM Ac-2230)</name>
    <name type="common">Micrococcus lysodeikticus</name>
    <dbReference type="NCBI Taxonomy" id="465515"/>
    <lineage>
        <taxon>Bacteria</taxon>
        <taxon>Bacillati</taxon>
        <taxon>Actinomycetota</taxon>
        <taxon>Actinomycetes</taxon>
        <taxon>Micrococcales</taxon>
        <taxon>Micrococcaceae</taxon>
        <taxon>Micrococcus</taxon>
    </lineage>
</organism>
<gene>
    <name evidence="1" type="primary">eno</name>
    <name type="ordered locus">Mlut_04980</name>
</gene>
<protein>
    <recommendedName>
        <fullName evidence="1">Enolase</fullName>
        <ecNumber evidence="1">4.2.1.11</ecNumber>
    </recommendedName>
    <alternativeName>
        <fullName evidence="1">2-phospho-D-glycerate hydro-lyase</fullName>
    </alternativeName>
    <alternativeName>
        <fullName evidence="1">2-phosphoglycerate dehydratase</fullName>
    </alternativeName>
</protein>
<name>ENO_MICLC</name>
<evidence type="ECO:0000255" key="1">
    <source>
        <dbReference type="HAMAP-Rule" id="MF_00318"/>
    </source>
</evidence>
<keyword id="KW-0963">Cytoplasm</keyword>
<keyword id="KW-0324">Glycolysis</keyword>
<keyword id="KW-0456">Lyase</keyword>
<keyword id="KW-0460">Magnesium</keyword>
<keyword id="KW-0479">Metal-binding</keyword>
<keyword id="KW-1185">Reference proteome</keyword>
<keyword id="KW-0964">Secreted</keyword>
<dbReference type="EC" id="4.2.1.11" evidence="1"/>
<dbReference type="EMBL" id="CP001628">
    <property type="protein sequence ID" value="ACS30039.1"/>
    <property type="molecule type" value="Genomic_DNA"/>
</dbReference>
<dbReference type="RefSeq" id="WP_010079332.1">
    <property type="nucleotide sequence ID" value="NC_012803.1"/>
</dbReference>
<dbReference type="SMR" id="C5C987"/>
<dbReference type="STRING" id="465515.Mlut_04980"/>
<dbReference type="EnsemblBacteria" id="ACS30039">
    <property type="protein sequence ID" value="ACS30039"/>
    <property type="gene ID" value="Mlut_04980"/>
</dbReference>
<dbReference type="GeneID" id="93344675"/>
<dbReference type="KEGG" id="mlu:Mlut_04980"/>
<dbReference type="PATRIC" id="fig|465515.4.peg.469"/>
<dbReference type="eggNOG" id="COG0148">
    <property type="taxonomic scope" value="Bacteria"/>
</dbReference>
<dbReference type="HOGENOM" id="CLU_031223_2_1_11"/>
<dbReference type="UniPathway" id="UPA00109">
    <property type="reaction ID" value="UER00187"/>
</dbReference>
<dbReference type="Proteomes" id="UP000000738">
    <property type="component" value="Chromosome"/>
</dbReference>
<dbReference type="GO" id="GO:0009986">
    <property type="term" value="C:cell surface"/>
    <property type="evidence" value="ECO:0007669"/>
    <property type="project" value="UniProtKB-SubCell"/>
</dbReference>
<dbReference type="GO" id="GO:0005576">
    <property type="term" value="C:extracellular region"/>
    <property type="evidence" value="ECO:0007669"/>
    <property type="project" value="UniProtKB-SubCell"/>
</dbReference>
<dbReference type="GO" id="GO:0000015">
    <property type="term" value="C:phosphopyruvate hydratase complex"/>
    <property type="evidence" value="ECO:0007669"/>
    <property type="project" value="InterPro"/>
</dbReference>
<dbReference type="GO" id="GO:0000287">
    <property type="term" value="F:magnesium ion binding"/>
    <property type="evidence" value="ECO:0007669"/>
    <property type="project" value="UniProtKB-UniRule"/>
</dbReference>
<dbReference type="GO" id="GO:0004634">
    <property type="term" value="F:phosphopyruvate hydratase activity"/>
    <property type="evidence" value="ECO:0007669"/>
    <property type="project" value="UniProtKB-UniRule"/>
</dbReference>
<dbReference type="GO" id="GO:0006096">
    <property type="term" value="P:glycolytic process"/>
    <property type="evidence" value="ECO:0007669"/>
    <property type="project" value="UniProtKB-UniRule"/>
</dbReference>
<dbReference type="CDD" id="cd03313">
    <property type="entry name" value="enolase"/>
    <property type="match status" value="1"/>
</dbReference>
<dbReference type="FunFam" id="3.20.20.120:FF:000001">
    <property type="entry name" value="Enolase"/>
    <property type="match status" value="1"/>
</dbReference>
<dbReference type="FunFam" id="3.30.390.10:FF:000001">
    <property type="entry name" value="Enolase"/>
    <property type="match status" value="1"/>
</dbReference>
<dbReference type="Gene3D" id="3.20.20.120">
    <property type="entry name" value="Enolase-like C-terminal domain"/>
    <property type="match status" value="1"/>
</dbReference>
<dbReference type="Gene3D" id="3.30.390.10">
    <property type="entry name" value="Enolase-like, N-terminal domain"/>
    <property type="match status" value="1"/>
</dbReference>
<dbReference type="HAMAP" id="MF_00318">
    <property type="entry name" value="Enolase"/>
    <property type="match status" value="1"/>
</dbReference>
<dbReference type="InterPro" id="IPR000941">
    <property type="entry name" value="Enolase"/>
</dbReference>
<dbReference type="InterPro" id="IPR036849">
    <property type="entry name" value="Enolase-like_C_sf"/>
</dbReference>
<dbReference type="InterPro" id="IPR029017">
    <property type="entry name" value="Enolase-like_N"/>
</dbReference>
<dbReference type="InterPro" id="IPR020810">
    <property type="entry name" value="Enolase_C"/>
</dbReference>
<dbReference type="InterPro" id="IPR020809">
    <property type="entry name" value="Enolase_CS"/>
</dbReference>
<dbReference type="InterPro" id="IPR020811">
    <property type="entry name" value="Enolase_N"/>
</dbReference>
<dbReference type="NCBIfam" id="TIGR01060">
    <property type="entry name" value="eno"/>
    <property type="match status" value="1"/>
</dbReference>
<dbReference type="PANTHER" id="PTHR11902">
    <property type="entry name" value="ENOLASE"/>
    <property type="match status" value="1"/>
</dbReference>
<dbReference type="PANTHER" id="PTHR11902:SF1">
    <property type="entry name" value="ENOLASE"/>
    <property type="match status" value="1"/>
</dbReference>
<dbReference type="Pfam" id="PF00113">
    <property type="entry name" value="Enolase_C"/>
    <property type="match status" value="1"/>
</dbReference>
<dbReference type="Pfam" id="PF03952">
    <property type="entry name" value="Enolase_N"/>
    <property type="match status" value="1"/>
</dbReference>
<dbReference type="PIRSF" id="PIRSF001400">
    <property type="entry name" value="Enolase"/>
    <property type="match status" value="1"/>
</dbReference>
<dbReference type="PRINTS" id="PR00148">
    <property type="entry name" value="ENOLASE"/>
</dbReference>
<dbReference type="SFLD" id="SFLDF00002">
    <property type="entry name" value="enolase"/>
    <property type="match status" value="1"/>
</dbReference>
<dbReference type="SFLD" id="SFLDG00178">
    <property type="entry name" value="enolase"/>
    <property type="match status" value="1"/>
</dbReference>
<dbReference type="SMART" id="SM01192">
    <property type="entry name" value="Enolase_C"/>
    <property type="match status" value="1"/>
</dbReference>
<dbReference type="SMART" id="SM01193">
    <property type="entry name" value="Enolase_N"/>
    <property type="match status" value="1"/>
</dbReference>
<dbReference type="SUPFAM" id="SSF51604">
    <property type="entry name" value="Enolase C-terminal domain-like"/>
    <property type="match status" value="1"/>
</dbReference>
<dbReference type="SUPFAM" id="SSF54826">
    <property type="entry name" value="Enolase N-terminal domain-like"/>
    <property type="match status" value="1"/>
</dbReference>
<dbReference type="PROSITE" id="PS00164">
    <property type="entry name" value="ENOLASE"/>
    <property type="match status" value="1"/>
</dbReference>
<comment type="function">
    <text evidence="1">Catalyzes the reversible conversion of 2-phosphoglycerate (2-PG) into phosphoenolpyruvate (PEP). It is essential for the degradation of carbohydrates via glycolysis.</text>
</comment>
<comment type="catalytic activity">
    <reaction evidence="1">
        <text>(2R)-2-phosphoglycerate = phosphoenolpyruvate + H2O</text>
        <dbReference type="Rhea" id="RHEA:10164"/>
        <dbReference type="ChEBI" id="CHEBI:15377"/>
        <dbReference type="ChEBI" id="CHEBI:58289"/>
        <dbReference type="ChEBI" id="CHEBI:58702"/>
        <dbReference type="EC" id="4.2.1.11"/>
    </reaction>
</comment>
<comment type="cofactor">
    <cofactor evidence="1">
        <name>Mg(2+)</name>
        <dbReference type="ChEBI" id="CHEBI:18420"/>
    </cofactor>
    <text evidence="1">Binds a second Mg(2+) ion via substrate during catalysis.</text>
</comment>
<comment type="pathway">
    <text evidence="1">Carbohydrate degradation; glycolysis; pyruvate from D-glyceraldehyde 3-phosphate: step 4/5.</text>
</comment>
<comment type="subcellular location">
    <subcellularLocation>
        <location evidence="1">Cytoplasm</location>
    </subcellularLocation>
    <subcellularLocation>
        <location evidence="1">Secreted</location>
    </subcellularLocation>
    <subcellularLocation>
        <location evidence="1">Cell surface</location>
    </subcellularLocation>
    <text evidence="1">Fractions of enolase are present in both the cytoplasm and on the cell surface.</text>
</comment>
<comment type="similarity">
    <text evidence="1">Belongs to the enolase family.</text>
</comment>
<feature type="chain" id="PRO_1000205100" description="Enolase">
    <location>
        <begin position="1"/>
        <end position="425"/>
    </location>
</feature>
<feature type="active site" description="Proton donor" evidence="1">
    <location>
        <position position="204"/>
    </location>
</feature>
<feature type="active site" description="Proton acceptor" evidence="1">
    <location>
        <position position="334"/>
    </location>
</feature>
<feature type="binding site" evidence="1">
    <location>
        <position position="162"/>
    </location>
    <ligand>
        <name>(2R)-2-phosphoglycerate</name>
        <dbReference type="ChEBI" id="CHEBI:58289"/>
    </ligand>
</feature>
<feature type="binding site" evidence="1">
    <location>
        <position position="241"/>
    </location>
    <ligand>
        <name>Mg(2+)</name>
        <dbReference type="ChEBI" id="CHEBI:18420"/>
    </ligand>
</feature>
<feature type="binding site" evidence="1">
    <location>
        <position position="282"/>
    </location>
    <ligand>
        <name>Mg(2+)</name>
        <dbReference type="ChEBI" id="CHEBI:18420"/>
    </ligand>
</feature>
<feature type="binding site" evidence="1">
    <location>
        <position position="309"/>
    </location>
    <ligand>
        <name>Mg(2+)</name>
        <dbReference type="ChEBI" id="CHEBI:18420"/>
    </ligand>
</feature>
<feature type="binding site" evidence="1">
    <location>
        <position position="334"/>
    </location>
    <ligand>
        <name>(2R)-2-phosphoglycerate</name>
        <dbReference type="ChEBI" id="CHEBI:58289"/>
    </ligand>
</feature>
<feature type="binding site" evidence="1">
    <location>
        <position position="363"/>
    </location>
    <ligand>
        <name>(2R)-2-phosphoglycerate</name>
        <dbReference type="ChEBI" id="CHEBI:58289"/>
    </ligand>
</feature>
<feature type="binding site" evidence="1">
    <location>
        <position position="364"/>
    </location>
    <ligand>
        <name>(2R)-2-phosphoglycerate</name>
        <dbReference type="ChEBI" id="CHEBI:58289"/>
    </ligand>
</feature>
<feature type="binding site" evidence="1">
    <location>
        <position position="385"/>
    </location>
    <ligand>
        <name>(2R)-2-phosphoglycerate</name>
        <dbReference type="ChEBI" id="CHEBI:58289"/>
    </ligand>
</feature>
<proteinExistence type="inferred from homology"/>
<reference key="1">
    <citation type="journal article" date="2010" name="J. Bacteriol.">
        <title>Genome sequence of the Fleming strain of Micrococcus luteus, a simple free-living actinobacterium.</title>
        <authorList>
            <person name="Young M."/>
            <person name="Artsatbanov V."/>
            <person name="Beller H.R."/>
            <person name="Chandra G."/>
            <person name="Chater K.F."/>
            <person name="Dover L.G."/>
            <person name="Goh E.B."/>
            <person name="Kahan T."/>
            <person name="Kaprelyants A.S."/>
            <person name="Kyrpides N."/>
            <person name="Lapidus A."/>
            <person name="Lowry S.R."/>
            <person name="Lykidis A."/>
            <person name="Mahillon J."/>
            <person name="Markowitz V."/>
            <person name="Mavromatis K."/>
            <person name="Mukamolova G.V."/>
            <person name="Oren A."/>
            <person name="Rokem J.S."/>
            <person name="Smith M.C."/>
            <person name="Young D.I."/>
            <person name="Greenblatt C.L."/>
        </authorList>
    </citation>
    <scope>NUCLEOTIDE SEQUENCE [LARGE SCALE GENOMIC DNA]</scope>
    <source>
        <strain>ATCC 4698 / DSM 20030 / JCM 1464 / CCM 169 / CCUG 5858 / IAM 1056 / NBRC 3333 / NCIMB 9278 / NCTC 2665 / VKM Ac-2230</strain>
    </source>
</reference>
<accession>C5C987</accession>
<sequence length="425" mass="45646">MALIDAIHAREILDSRGNPTVEVEVLLTDGSLGRAAVPSGASTGEFEAVERRDGDKKRYGGKGVLDAVAAVEGIAEELEGEFAADQRAVDRAMRDLDGTPNKGKLGANAILGVSMAVAVAAAQASDLMLYKYLGGPNSHVLPVPMMNILNGGAHADSNVDIQEFMIAPIGAPSFREALRWGTEVYHALKTVLQEKGLSTGLGDEGGFAPSLESNRAALDLIAEAVTKAGYRLGEDIALALDVASSEFFDKGSYTFEGQQRSAEEMAAYYTELVDNYPIVSIEDPLDEDDWEGWQHLTAQLGDRVQLVGDDLFVTNVERLQRGIDEKAGNALLVKVNQIGSLTETFDAISLAQRHMFHCMISHRSGETEDTFIADLAVATNAGQIKTGAPARSDRVAKYNQLLRIEEDLADAAVYAGRSAFPRFRG</sequence>